<evidence type="ECO:0000255" key="1">
    <source>
        <dbReference type="HAMAP-Rule" id="MF_00388"/>
    </source>
</evidence>
<dbReference type="EC" id="3.5.1.108" evidence="1"/>
<dbReference type="EMBL" id="CP001164">
    <property type="protein sequence ID" value="ACI36583.1"/>
    <property type="molecule type" value="Genomic_DNA"/>
</dbReference>
<dbReference type="RefSeq" id="WP_000595482.1">
    <property type="nucleotide sequence ID" value="NC_011353.1"/>
</dbReference>
<dbReference type="SMR" id="B5YZD2"/>
<dbReference type="GeneID" id="93777338"/>
<dbReference type="KEGG" id="ecf:ECH74115_0104"/>
<dbReference type="HOGENOM" id="CLU_046528_1_0_6"/>
<dbReference type="UniPathway" id="UPA00359">
    <property type="reaction ID" value="UER00478"/>
</dbReference>
<dbReference type="GO" id="GO:0016020">
    <property type="term" value="C:membrane"/>
    <property type="evidence" value="ECO:0007669"/>
    <property type="project" value="GOC"/>
</dbReference>
<dbReference type="GO" id="GO:0046872">
    <property type="term" value="F:metal ion binding"/>
    <property type="evidence" value="ECO:0007669"/>
    <property type="project" value="UniProtKB-KW"/>
</dbReference>
<dbReference type="GO" id="GO:0103117">
    <property type="term" value="F:UDP-3-O-acyl-N-acetylglucosamine deacetylase activity"/>
    <property type="evidence" value="ECO:0007669"/>
    <property type="project" value="UniProtKB-UniRule"/>
</dbReference>
<dbReference type="GO" id="GO:0009245">
    <property type="term" value="P:lipid A biosynthetic process"/>
    <property type="evidence" value="ECO:0007669"/>
    <property type="project" value="UniProtKB-UniRule"/>
</dbReference>
<dbReference type="FunFam" id="3.30.1700.10:FF:000001">
    <property type="entry name" value="UDP-3-O-acyl-N-acetylglucosamine deacetylase"/>
    <property type="match status" value="1"/>
</dbReference>
<dbReference type="FunFam" id="3.30.230.20:FF:000001">
    <property type="entry name" value="UDP-3-O-acyl-N-acetylglucosamine deacetylase"/>
    <property type="match status" value="1"/>
</dbReference>
<dbReference type="Gene3D" id="3.30.230.20">
    <property type="entry name" value="lpxc deacetylase, domain 1"/>
    <property type="match status" value="1"/>
</dbReference>
<dbReference type="Gene3D" id="3.30.1700.10">
    <property type="entry name" value="lpxc deacetylase, domain 2"/>
    <property type="match status" value="1"/>
</dbReference>
<dbReference type="HAMAP" id="MF_00388">
    <property type="entry name" value="LpxC"/>
    <property type="match status" value="1"/>
</dbReference>
<dbReference type="InterPro" id="IPR020568">
    <property type="entry name" value="Ribosomal_Su5_D2-typ_SF"/>
</dbReference>
<dbReference type="InterPro" id="IPR004463">
    <property type="entry name" value="UDP-acyl_GlcNac_deAcase"/>
</dbReference>
<dbReference type="InterPro" id="IPR011334">
    <property type="entry name" value="UDP-acyl_GlcNac_deAcase_C"/>
</dbReference>
<dbReference type="InterPro" id="IPR015870">
    <property type="entry name" value="UDP-acyl_N-AcGlcN_deAcase_N"/>
</dbReference>
<dbReference type="NCBIfam" id="TIGR00325">
    <property type="entry name" value="lpxC"/>
    <property type="match status" value="1"/>
</dbReference>
<dbReference type="PANTHER" id="PTHR33694">
    <property type="entry name" value="UDP-3-O-ACYL-N-ACETYLGLUCOSAMINE DEACETYLASE 1, MITOCHONDRIAL-RELATED"/>
    <property type="match status" value="1"/>
</dbReference>
<dbReference type="PANTHER" id="PTHR33694:SF1">
    <property type="entry name" value="UDP-3-O-ACYL-N-ACETYLGLUCOSAMINE DEACETYLASE 1, MITOCHONDRIAL-RELATED"/>
    <property type="match status" value="1"/>
</dbReference>
<dbReference type="Pfam" id="PF03331">
    <property type="entry name" value="LpxC"/>
    <property type="match status" value="1"/>
</dbReference>
<dbReference type="SUPFAM" id="SSF54211">
    <property type="entry name" value="Ribosomal protein S5 domain 2-like"/>
    <property type="match status" value="2"/>
</dbReference>
<organism>
    <name type="scientific">Escherichia coli O157:H7 (strain EC4115 / EHEC)</name>
    <dbReference type="NCBI Taxonomy" id="444450"/>
    <lineage>
        <taxon>Bacteria</taxon>
        <taxon>Pseudomonadati</taxon>
        <taxon>Pseudomonadota</taxon>
        <taxon>Gammaproteobacteria</taxon>
        <taxon>Enterobacterales</taxon>
        <taxon>Enterobacteriaceae</taxon>
        <taxon>Escherichia</taxon>
    </lineage>
</organism>
<feature type="chain" id="PRO_1000122780" description="UDP-3-O-acyl-N-acetylglucosamine deacetylase">
    <location>
        <begin position="1"/>
        <end position="305"/>
    </location>
</feature>
<feature type="active site" description="Proton donor" evidence="1">
    <location>
        <position position="265"/>
    </location>
</feature>
<feature type="binding site" evidence="1">
    <location>
        <position position="79"/>
    </location>
    <ligand>
        <name>Zn(2+)</name>
        <dbReference type="ChEBI" id="CHEBI:29105"/>
    </ligand>
</feature>
<feature type="binding site" evidence="1">
    <location>
        <position position="238"/>
    </location>
    <ligand>
        <name>Zn(2+)</name>
        <dbReference type="ChEBI" id="CHEBI:29105"/>
    </ligand>
</feature>
<feature type="binding site" evidence="1">
    <location>
        <position position="242"/>
    </location>
    <ligand>
        <name>Zn(2+)</name>
        <dbReference type="ChEBI" id="CHEBI:29105"/>
    </ligand>
</feature>
<sequence length="305" mass="33956">MIKQRTLKRIVQATGVGLHTGKKVTLTLRPAPANTGVIYRRTDLNPPVDFPADAKSVRDTMLCTCLVNEHDVRISTVEHLNAALAGLGIDNIVIEVNAPEIPIMDGSAAPFVYLLLDAGIDELNCAKKFVRIKETVRVEDGDKWAEFKPYNGFSLDFTIDFNHPAIDSSNQRYAMNFSADAFMRQISRARTFGFMRDIEYLQSRGLCLGGSFDCAIVVDDYRVLNEDGLRFEDEFVRHKMLDAIGDLFMCGHNIIGAFTAYKSGHALNNKLLQAVLAKQEAWEYVTFQDDAELPLAFKAPSAVLA</sequence>
<reference key="1">
    <citation type="journal article" date="2011" name="Proc. Natl. Acad. Sci. U.S.A.">
        <title>Genomic anatomy of Escherichia coli O157:H7 outbreaks.</title>
        <authorList>
            <person name="Eppinger M."/>
            <person name="Mammel M.K."/>
            <person name="Leclerc J.E."/>
            <person name="Ravel J."/>
            <person name="Cebula T.A."/>
        </authorList>
    </citation>
    <scope>NUCLEOTIDE SEQUENCE [LARGE SCALE GENOMIC DNA]</scope>
    <source>
        <strain>EC4115 / EHEC</strain>
    </source>
</reference>
<gene>
    <name evidence="1" type="primary">lpxC</name>
    <name type="ordered locus">ECH74115_0104</name>
</gene>
<proteinExistence type="inferred from homology"/>
<keyword id="KW-0378">Hydrolase</keyword>
<keyword id="KW-0441">Lipid A biosynthesis</keyword>
<keyword id="KW-0444">Lipid biosynthesis</keyword>
<keyword id="KW-0443">Lipid metabolism</keyword>
<keyword id="KW-0479">Metal-binding</keyword>
<keyword id="KW-0862">Zinc</keyword>
<comment type="function">
    <text evidence="1">Catalyzes the hydrolysis of UDP-3-O-myristoyl-N-acetylglucosamine to form UDP-3-O-myristoylglucosamine and acetate, the committed step in lipid A biosynthesis.</text>
</comment>
<comment type="catalytic activity">
    <reaction evidence="1">
        <text>a UDP-3-O-[(3R)-3-hydroxyacyl]-N-acetyl-alpha-D-glucosamine + H2O = a UDP-3-O-[(3R)-3-hydroxyacyl]-alpha-D-glucosamine + acetate</text>
        <dbReference type="Rhea" id="RHEA:67816"/>
        <dbReference type="ChEBI" id="CHEBI:15377"/>
        <dbReference type="ChEBI" id="CHEBI:30089"/>
        <dbReference type="ChEBI" id="CHEBI:137740"/>
        <dbReference type="ChEBI" id="CHEBI:173225"/>
        <dbReference type="EC" id="3.5.1.108"/>
    </reaction>
</comment>
<comment type="cofactor">
    <cofactor evidence="1">
        <name>Zn(2+)</name>
        <dbReference type="ChEBI" id="CHEBI:29105"/>
    </cofactor>
</comment>
<comment type="pathway">
    <text evidence="1">Glycolipid biosynthesis; lipid IV(A) biosynthesis; lipid IV(A) from (3R)-3-hydroxytetradecanoyl-[acyl-carrier-protein] and UDP-N-acetyl-alpha-D-glucosamine: step 2/6.</text>
</comment>
<comment type="similarity">
    <text evidence="1">Belongs to the LpxC family.</text>
</comment>
<accession>B5YZD2</accession>
<name>LPXC_ECO5E</name>
<protein>
    <recommendedName>
        <fullName evidence="1">UDP-3-O-acyl-N-acetylglucosamine deacetylase</fullName>
        <shortName evidence="1">UDP-3-O-acyl-GlcNAc deacetylase</shortName>
        <ecNumber evidence="1">3.5.1.108</ecNumber>
    </recommendedName>
    <alternativeName>
        <fullName evidence="1">UDP-3-O-[R-3-hydroxymyristoyl]-N-acetylglucosamine deacetylase</fullName>
    </alternativeName>
</protein>